<gene>
    <name evidence="1" type="primary">glgS</name>
    <name type="ordered locus">ECSE_3328</name>
</gene>
<name>GLGS_ECOSE</name>
<proteinExistence type="inferred from homology"/>
<dbReference type="EMBL" id="AP009240">
    <property type="protein sequence ID" value="BAG78852.1"/>
    <property type="molecule type" value="Genomic_DNA"/>
</dbReference>
<dbReference type="RefSeq" id="WP_000350095.1">
    <property type="nucleotide sequence ID" value="NC_011415.1"/>
</dbReference>
<dbReference type="SMR" id="B6I419"/>
<dbReference type="GeneID" id="93778946"/>
<dbReference type="KEGG" id="ecy:ECSE_3328"/>
<dbReference type="HOGENOM" id="CLU_185971_0_0_6"/>
<dbReference type="Proteomes" id="UP000008199">
    <property type="component" value="Chromosome"/>
</dbReference>
<dbReference type="GO" id="GO:1902201">
    <property type="term" value="P:negative regulation of bacterial-type flagellum-dependent cell motility"/>
    <property type="evidence" value="ECO:0007669"/>
    <property type="project" value="UniProtKB-UniRule"/>
</dbReference>
<dbReference type="GO" id="GO:1900191">
    <property type="term" value="P:negative regulation of single-species biofilm formation"/>
    <property type="evidence" value="ECO:0007669"/>
    <property type="project" value="UniProtKB-UniRule"/>
</dbReference>
<dbReference type="FunFam" id="1.20.970.20:FF:000001">
    <property type="entry name" value="Surface composition regulator"/>
    <property type="match status" value="1"/>
</dbReference>
<dbReference type="Gene3D" id="1.20.970.20">
    <property type="entry name" value="Glycogen synthesis protein GlgS"/>
    <property type="match status" value="1"/>
</dbReference>
<dbReference type="HAMAP" id="MF_00525">
    <property type="entry name" value="GlgS"/>
    <property type="match status" value="1"/>
</dbReference>
<dbReference type="InterPro" id="IPR015065">
    <property type="entry name" value="GlgS"/>
</dbReference>
<dbReference type="InterPro" id="IPR036295">
    <property type="entry name" value="GlgS_sf"/>
</dbReference>
<dbReference type="NCBIfam" id="NF002793">
    <property type="entry name" value="PRK02922.1"/>
    <property type="match status" value="1"/>
</dbReference>
<dbReference type="Pfam" id="PF08971">
    <property type="entry name" value="GlgS"/>
    <property type="match status" value="1"/>
</dbReference>
<dbReference type="SUPFAM" id="SSF109747">
    <property type="entry name" value="Glycogen synthesis protein GlgS"/>
    <property type="match status" value="1"/>
</dbReference>
<organism>
    <name type="scientific">Escherichia coli (strain SE11)</name>
    <dbReference type="NCBI Taxonomy" id="409438"/>
    <lineage>
        <taxon>Bacteria</taxon>
        <taxon>Pseudomonadati</taxon>
        <taxon>Pseudomonadota</taxon>
        <taxon>Gammaproteobacteria</taxon>
        <taxon>Enterobacterales</taxon>
        <taxon>Enterobacteriaceae</taxon>
        <taxon>Escherichia</taxon>
    </lineage>
</organism>
<protein>
    <recommendedName>
        <fullName evidence="1">Surface composition regulator</fullName>
    </recommendedName>
</protein>
<comment type="function">
    <text evidence="1">Major determinant of cell surface composition. Negatively regulates motility, adhesion and synthesis of biofilm exopolysaccharides.</text>
</comment>
<comment type="similarity">
    <text evidence="1">Belongs to the GlgS family.</text>
</comment>
<evidence type="ECO:0000255" key="1">
    <source>
        <dbReference type="HAMAP-Rule" id="MF_00525"/>
    </source>
</evidence>
<accession>B6I419</accession>
<feature type="chain" id="PRO_1000127740" description="Surface composition regulator">
    <location>
        <begin position="1"/>
        <end position="66"/>
    </location>
</feature>
<sequence>MDHSLNSLNNFDFLARSFARMHAEGRPVDILAVTGNMDEEHRTWFCARYAWYCQQMMQARELELEH</sequence>
<reference key="1">
    <citation type="journal article" date="2008" name="DNA Res.">
        <title>Complete genome sequence and comparative analysis of the wild-type commensal Escherichia coli strain SE11 isolated from a healthy adult.</title>
        <authorList>
            <person name="Oshima K."/>
            <person name="Toh H."/>
            <person name="Ogura Y."/>
            <person name="Sasamoto H."/>
            <person name="Morita H."/>
            <person name="Park S.-H."/>
            <person name="Ooka T."/>
            <person name="Iyoda S."/>
            <person name="Taylor T.D."/>
            <person name="Hayashi T."/>
            <person name="Itoh K."/>
            <person name="Hattori M."/>
        </authorList>
    </citation>
    <scope>NUCLEOTIDE SEQUENCE [LARGE SCALE GENOMIC DNA]</scope>
    <source>
        <strain>SE11</strain>
    </source>
</reference>